<proteinExistence type="evidence at protein level"/>
<name>RICTR_MOUSE</name>
<accession>Q6QI06</accession>
<accession>E9QPE0</accession>
<accession>Q0VAV4</accession>
<accession>Q69Z40</accession>
<accession>Q6PDL2</accession>
<accession>Q6RI74</accession>
<accession>Q8BPH9</accession>
<accession>Q8CBF2</accession>
<sequence length="1708" mass="191570">MAAIGRGRSLKNLRIRGRNDSGEENVPLDLTREPSDNLREILQNVAKLQGVSNMRKLGHLNNFTKLLCDIGHSEEKLGFNYEDIIICLRLALLNEAKEVRAAGLRALRYLIQDSSILQKVLKLKVDYLIARCIDIQQSNEVERTQALRLVRKMITVNASLFPSSVANSLIAVGNDGLQERDRMVRACIAIICELALQNPEVVALRGGLNTILKNVIDCQLSRINEALITTILHLLNHPKTRQYVRADVELERILAPYTDFHYRHSPDTAEGQLKEDREARFLASKMGIIATFRSWAGIINLCKPGNSGIQSLIGVLCIPNMEIRRGLLEVLYDIFRLPLPVVTDEFIEALLSVDPGRFQDSWRLSDGFVAAEAKTILPHRARSRPDLMDNYLALILSAFIRNGLLEGLVEVITNSDDHISVRATILLGELLHMANTILPHSHSHHLHCLPTLMNMAASFDIPKEKRLRASAALNCLNRFHEMKKRGPKPYSLHLDHIIQKAIATHHKRDQYLRVQKDIFVLKDTEEALLINLRDSQVLQHKENLDWDWNLIGTILKWPNVNLRNYKDEQLHRFVRRLLYFYKPSSKLYASLDLDLAKSKQLTVVGCQFTEFLLESEEDGQGYLEDLVKDIVQWLNASSGVKPERSLQNNGLLTTLSQHYFLFIGTLSCHPHGVKMLEKCSVFQCLLNLCSLKNQDHLIKLTVSSLDYSRDGLARVILSKILTAATDACRLYATKHLRVLLRANVEFFNNWGIELLVTQLHDKNKTISSEALDILDEACEDKANLHALIQMKPALSHLGDKGLLLLLRFLSIPKGFSYLNERGYVAKQLEKWHKEYNSKYVDLIEEQLNEALTTYRKPIDGDNYVRRSNQRLQRPHVYLPVHLYGQLVHHKTGCHLLEVQSIITELCHNVRTPDLDKWEDIKKLKASLWALGNIGSSNWGLNLLQEENVIPDILKLAKQCEVLSIRGTCVYVLGLIAKTKQGCDILKCHSWDSVRHSRKHLWPVVPDDVEQLCNELSSVPSTLSLNSESTSSRHNSESESAPSSMFMLEDDRFGSTSTSTFFLDINEDAEPAFYDRPGPIKDKNSFPFFGSSKLVKNRILNSLTLPTKKHRSSSDPKGGKLSSENKTSNRRIRTLTEPSVDLNHSEDFTSSSAQKSLQLEPSFVGNKHLEDAGSTPSIGENDLKFPKSFGTETHRENTSRERLVVEGSASSHIKIRSQSFNTDTTTSGISSMSSSPSRETVAVDPTAMDTDCGSLSTVVSTKTVKTSHYLTPQSNHLSLSKSNSVSLVPPGSSHTLPRRAQSLKAPSIATIKSLADCNFSYTSSRDAFGYATLKRLQQQRMHPSLSHSEALASPAKDVLFTDTITMKANSFESRLTPSRFMKALSYASLDKEDLLSPINHNTLQRSSSVRSMVSSATYGGSDDYIGLALPVDINDIFQIKDVPYFQSKHVPPPDDRGARMFSHDGAGLSSGAGGLVKNSFHLLRQQMSLTEIMNSVHSDASLFLESTEDTGLQEHTDDNCLYCVCIELLGFQPSNQLSSICSHSDLQDIPYSDWCEQTIHNPLEVVPSKFSGISGCSDGASQEEGSASSTKSTELLLGVKTIPDDTPMCRILLRKEVLRLVVNLSSSVSTKCHETGLLTIKEKYPQTFDDICLYSEVSHLLSHCTFRLQCRRFIQELFQDVQFLQMHEEAEAVLAIPPIQPIVDESAES</sequence>
<feature type="chain" id="PRO_0000308180" description="Rapamycin-insensitive companion of mTOR">
    <location>
        <begin position="1"/>
        <end position="1708"/>
    </location>
</feature>
<feature type="region of interest" description="Interaction with NBN" evidence="1">
    <location>
        <begin position="1"/>
        <end position="789"/>
    </location>
</feature>
<feature type="region of interest" description="Ribosome-binding domain" evidence="2">
    <location>
        <begin position="521"/>
        <end position="570"/>
    </location>
</feature>
<feature type="region of interest" description="Disordered" evidence="3">
    <location>
        <begin position="1021"/>
        <end position="1045"/>
    </location>
</feature>
<feature type="region of interest" description="Disordered" evidence="3">
    <location>
        <begin position="1101"/>
        <end position="1198"/>
    </location>
</feature>
<feature type="region of interest" description="Disordered" evidence="3">
    <location>
        <begin position="1218"/>
        <end position="1247"/>
    </location>
</feature>
<feature type="compositionally biased region" description="Low complexity" evidence="3">
    <location>
        <begin position="1021"/>
        <end position="1043"/>
    </location>
</feature>
<feature type="compositionally biased region" description="Polar residues" evidence="3">
    <location>
        <begin position="1147"/>
        <end position="1158"/>
    </location>
</feature>
<feature type="compositionally biased region" description="Low complexity" evidence="3">
    <location>
        <begin position="1221"/>
        <end position="1239"/>
    </location>
</feature>
<feature type="binding site" evidence="2">
    <location>
        <position position="543"/>
    </location>
    <ligand>
        <name>ATP</name>
        <dbReference type="ChEBI" id="CHEBI:30616"/>
    </ligand>
</feature>
<feature type="binding site" evidence="2">
    <location>
        <position position="572"/>
    </location>
    <ligand>
        <name>ATP</name>
        <dbReference type="ChEBI" id="CHEBI:30616"/>
    </ligand>
</feature>
<feature type="binding site" evidence="2">
    <location>
        <position position="576"/>
    </location>
    <ligand>
        <name>ATP</name>
        <dbReference type="ChEBI" id="CHEBI:30616"/>
    </ligand>
</feature>
<feature type="binding site" evidence="2">
    <location>
        <position position="1514"/>
    </location>
    <ligand>
        <name>Zn(2+)</name>
        <dbReference type="ChEBI" id="CHEBI:29105"/>
    </ligand>
</feature>
<feature type="binding site" evidence="2">
    <location>
        <position position="1519"/>
    </location>
    <ligand>
        <name>Zn(2+)</name>
        <dbReference type="ChEBI" id="CHEBI:29105"/>
    </ligand>
</feature>
<feature type="binding site" evidence="2">
    <location>
        <position position="1522"/>
    </location>
    <ligand>
        <name>Zn(2+)</name>
        <dbReference type="ChEBI" id="CHEBI:29105"/>
    </ligand>
</feature>
<feature type="binding site" evidence="2">
    <location>
        <position position="1651"/>
    </location>
    <ligand>
        <name>Zn(2+)</name>
        <dbReference type="ChEBI" id="CHEBI:29105"/>
    </ligand>
</feature>
<feature type="modified residue" description="Phosphoserine" evidence="28">
    <location>
        <position position="21"/>
    </location>
</feature>
<feature type="modified residue" description="Phosphoserine" evidence="2">
    <location>
        <position position="35"/>
    </location>
</feature>
<feature type="modified residue" description="Phosphoserine" evidence="2">
    <location>
        <position position="265"/>
    </location>
</feature>
<feature type="modified residue" description="N6-acetyllysine" evidence="2">
    <location>
        <position position="1092"/>
    </location>
</feature>
<feature type="modified residue" description="N6-acetyllysine" evidence="2">
    <location>
        <position position="1095"/>
    </location>
</feature>
<feature type="modified residue" description="Phosphothreonine" evidence="2">
    <location>
        <position position="1103"/>
    </location>
</feature>
<feature type="modified residue" description="N6-acetyllysine" evidence="2">
    <location>
        <position position="1116"/>
    </location>
</feature>
<feature type="modified residue" description="N6-acetyllysine" evidence="2">
    <location>
        <position position="1119"/>
    </location>
</feature>
<feature type="modified residue" description="N6-acetyllysine" evidence="2">
    <location>
        <position position="1125"/>
    </location>
</feature>
<feature type="modified residue" description="Phosphothreonine; by RPS6KB1" evidence="2">
    <location>
        <position position="1135"/>
    </location>
</feature>
<feature type="modified residue" description="Phosphoserine" evidence="2">
    <location>
        <position position="1138"/>
    </location>
</feature>
<feature type="modified residue" description="Phosphoserine" evidence="2">
    <location>
        <position position="1161"/>
    </location>
</feature>
<feature type="modified residue" description="Phosphoserine" evidence="2">
    <location>
        <position position="1218"/>
    </location>
</feature>
<feature type="modified residue" description="Phosphoserine" evidence="28">
    <location>
        <position position="1234"/>
    </location>
</feature>
<feature type="modified residue" description="Phosphothreonine" evidence="2">
    <location>
        <position position="1270"/>
    </location>
</feature>
<feature type="modified residue" description="Phosphoserine" evidence="2">
    <location>
        <position position="1273"/>
    </location>
</feature>
<feature type="modified residue" description="Phosphoserine" evidence="2">
    <location>
        <position position="1277"/>
    </location>
</feature>
<feature type="modified residue" description="Phosphoserine" evidence="2">
    <location>
        <position position="1281"/>
    </location>
</feature>
<feature type="modified residue" description="Phosphoserine" evidence="2">
    <location>
        <position position="1283"/>
    </location>
</feature>
<feature type="modified residue" description="Phosphothreonine" evidence="2">
    <location>
        <position position="1294"/>
    </location>
</feature>
<feature type="modified residue" description="Phosphoserine" evidence="2">
    <location>
        <position position="1301"/>
    </location>
</feature>
<feature type="modified residue" description="Phosphoserine" evidence="28">
    <location>
        <position position="1312"/>
    </location>
</feature>
<feature type="modified residue" description="Phosphothreonine" evidence="2">
    <location>
        <position position="1331"/>
    </location>
</feature>
<feature type="modified residue" description="Phosphoserine" evidence="2">
    <location>
        <position position="1345"/>
    </location>
</feature>
<feature type="modified residue" description="Phosphoserine" evidence="2">
    <location>
        <position position="1352"/>
    </location>
</feature>
<feature type="modified residue" description="Phosphothreonine" evidence="2">
    <location>
        <position position="1375"/>
    </location>
</feature>
<feature type="modified residue" description="Phosphoserine" evidence="28">
    <location>
        <position position="1384"/>
    </location>
</feature>
<feature type="modified residue" description="Phosphotyrosine" evidence="2">
    <location>
        <position position="1385"/>
    </location>
</feature>
<feature type="modified residue" description="Phosphoserine" evidence="28">
    <location>
        <position position="1387"/>
    </location>
</feature>
<feature type="modified residue" description="Phosphoserine" evidence="2">
    <location>
        <position position="1395"/>
    </location>
</feature>
<feature type="modified residue" description="Phosphoserine" evidence="2">
    <location>
        <position position="1410"/>
    </location>
</feature>
<feature type="modified residue" description="Phosphoserine" evidence="2">
    <location>
        <position position="1570"/>
    </location>
</feature>
<feature type="modified residue" description="Phosphoserine" evidence="2">
    <location>
        <position position="1573"/>
    </location>
</feature>
<feature type="modified residue" description="Phosphoserine" evidence="2">
    <location>
        <position position="1576"/>
    </location>
</feature>
<feature type="modified residue" description="Phosphoserine" evidence="2">
    <location>
        <position position="1591"/>
    </location>
</feature>
<feature type="cross-link" description="Glycyl lysine isopeptide (Lys-Gly) (interchain with G-Cter in ubiquitin)" evidence="2">
    <location>
        <position position="274"/>
    </location>
</feature>
<feature type="splice variant" id="VSP_052583" description="In isoform 2." evidence="18">
    <location>
        <begin position="1"/>
        <end position="152"/>
    </location>
</feature>
<feature type="sequence conflict" description="In Ref. 1; AAR89074." evidence="19" ref="1">
    <original>I</original>
    <variation>V</variation>
    <location>
        <position position="15"/>
    </location>
</feature>
<feature type="sequence conflict" description="In Ref. 1; AAR89074." evidence="19" ref="1">
    <original>R</original>
    <variation>Q</variation>
    <location>
        <position position="185"/>
    </location>
</feature>
<feature type="sequence conflict" description="In Ref. 1; AAR89074." evidence="19" ref="1">
    <original>L</original>
    <variation>I</variation>
    <location>
        <position position="405"/>
    </location>
</feature>
<feature type="sequence conflict" description="In Ref. 2; AAS46920." evidence="19" ref="2">
    <original>I</original>
    <variation>L</variation>
    <location>
        <position position="698"/>
    </location>
</feature>
<organism>
    <name type="scientific">Mus musculus</name>
    <name type="common">Mouse</name>
    <dbReference type="NCBI Taxonomy" id="10090"/>
    <lineage>
        <taxon>Eukaryota</taxon>
        <taxon>Metazoa</taxon>
        <taxon>Chordata</taxon>
        <taxon>Craniata</taxon>
        <taxon>Vertebrata</taxon>
        <taxon>Euteleostomi</taxon>
        <taxon>Mammalia</taxon>
        <taxon>Eutheria</taxon>
        <taxon>Euarchontoglires</taxon>
        <taxon>Glires</taxon>
        <taxon>Rodentia</taxon>
        <taxon>Myomorpha</taxon>
        <taxon>Muroidea</taxon>
        <taxon>Muridae</taxon>
        <taxon>Murinae</taxon>
        <taxon>Mus</taxon>
        <taxon>Mus</taxon>
    </lineage>
</organism>
<protein>
    <recommendedName>
        <fullName evidence="19">Rapamycin-insensitive companion of mTOR</fullName>
    </recommendedName>
    <alternativeName>
        <fullName evidence="17">AVO3 homolog</fullName>
        <shortName evidence="17">mAVO3</shortName>
    </alternativeName>
    <alternativeName>
        <fullName>Protein pianissimo</fullName>
    </alternativeName>
</protein>
<reference evidence="19 22" key="1">
    <citation type="journal article" date="2004" name="Nat. Cell Biol.">
        <title>Mammalian TOR complex 2 controls the actin cytoskeleton and is rapamycin insensitive.</title>
        <authorList>
            <person name="Jacinto E."/>
            <person name="Loewith R."/>
            <person name="Schmidt A."/>
            <person name="Lin S."/>
            <person name="Ruegg M.A."/>
            <person name="Hall A."/>
            <person name="Hall M.N."/>
        </authorList>
    </citation>
    <scope>NUCLEOTIDE SEQUENCE [MRNA] (ISOFORM 1)</scope>
    <scope>IDENTIFICATION IN TORC2 COMPLEX</scope>
    <source>
        <strain evidence="22">C3H/HeJ</strain>
    </source>
</reference>
<reference evidence="19 23" key="2">
    <citation type="journal article" date="2006" name="Dev. Cell">
        <title>Multiallelic disruption of the rictor gene in mice reveals that mTOR complex 2 is essential for fetal growth and viability.</title>
        <authorList>
            <person name="Shiota C."/>
            <person name="Woo J.-T."/>
            <person name="Lindner J."/>
            <person name="Shelton K.D."/>
            <person name="Magnuson M.A."/>
        </authorList>
    </citation>
    <scope>NUCLEOTIDE SEQUENCE [MRNA] (ISOFORM 1)</scope>
    <scope>FUNCTION</scope>
    <scope>IDENTIFICATION IN TORC2 COMPLEX</scope>
    <scope>DISRUPTION PHENOTYPE</scope>
    <source>
        <strain evidence="23">LAF1</strain>
    </source>
</reference>
<reference key="3">
    <citation type="journal article" date="2009" name="PLoS Biol.">
        <title>Lineage-specific biology revealed by a finished genome assembly of the mouse.</title>
        <authorList>
            <person name="Church D.M."/>
            <person name="Goodstadt L."/>
            <person name="Hillier L.W."/>
            <person name="Zody M.C."/>
            <person name="Goldstein S."/>
            <person name="She X."/>
            <person name="Bult C.J."/>
            <person name="Agarwala R."/>
            <person name="Cherry J.L."/>
            <person name="DiCuccio M."/>
            <person name="Hlavina W."/>
            <person name="Kapustin Y."/>
            <person name="Meric P."/>
            <person name="Maglott D."/>
            <person name="Birtle Z."/>
            <person name="Marques A.C."/>
            <person name="Graves T."/>
            <person name="Zhou S."/>
            <person name="Teague B."/>
            <person name="Potamousis K."/>
            <person name="Churas C."/>
            <person name="Place M."/>
            <person name="Herschleb J."/>
            <person name="Runnheim R."/>
            <person name="Forrest D."/>
            <person name="Amos-Landgraf J."/>
            <person name="Schwartz D.C."/>
            <person name="Cheng Z."/>
            <person name="Lindblad-Toh K."/>
            <person name="Eichler E.E."/>
            <person name="Ponting C.P."/>
        </authorList>
    </citation>
    <scope>NUCLEOTIDE SEQUENCE [LARGE SCALE GENOMIC DNA]</scope>
    <source>
        <strain>C57BL/6J</strain>
    </source>
</reference>
<reference evidence="19 21" key="4">
    <citation type="journal article" date="2004" name="Genome Res.">
        <title>The status, quality, and expansion of the NIH full-length cDNA project: the Mammalian Gene Collection (MGC).</title>
        <authorList>
            <consortium name="The MGC Project Team"/>
        </authorList>
    </citation>
    <scope>NUCLEOTIDE SEQUENCE [LARGE SCALE MRNA] (ISOFORM 2)</scope>
    <source>
        <strain evidence="20">C57BL/6J</strain>
        <tissue evidence="20">Brain</tissue>
    </source>
</reference>
<reference evidence="19 24" key="5">
    <citation type="journal article" date="2005" name="Science">
        <title>The transcriptional landscape of the mammalian genome.</title>
        <authorList>
            <person name="Carninci P."/>
            <person name="Kasukawa T."/>
            <person name="Katayama S."/>
            <person name="Gough J."/>
            <person name="Frith M.C."/>
            <person name="Maeda N."/>
            <person name="Oyama R."/>
            <person name="Ravasi T."/>
            <person name="Lenhard B."/>
            <person name="Wells C."/>
            <person name="Kodzius R."/>
            <person name="Shimokawa K."/>
            <person name="Bajic V.B."/>
            <person name="Brenner S.E."/>
            <person name="Batalov S."/>
            <person name="Forrest A.R."/>
            <person name="Zavolan M."/>
            <person name="Davis M.J."/>
            <person name="Wilming L.G."/>
            <person name="Aidinis V."/>
            <person name="Allen J.E."/>
            <person name="Ambesi-Impiombato A."/>
            <person name="Apweiler R."/>
            <person name="Aturaliya R.N."/>
            <person name="Bailey T.L."/>
            <person name="Bansal M."/>
            <person name="Baxter L."/>
            <person name="Beisel K.W."/>
            <person name="Bersano T."/>
            <person name="Bono H."/>
            <person name="Chalk A.M."/>
            <person name="Chiu K.P."/>
            <person name="Choudhary V."/>
            <person name="Christoffels A."/>
            <person name="Clutterbuck D.R."/>
            <person name="Crowe M.L."/>
            <person name="Dalla E."/>
            <person name="Dalrymple B.P."/>
            <person name="de Bono B."/>
            <person name="Della Gatta G."/>
            <person name="di Bernardo D."/>
            <person name="Down T."/>
            <person name="Engstrom P."/>
            <person name="Fagiolini M."/>
            <person name="Faulkner G."/>
            <person name="Fletcher C.F."/>
            <person name="Fukushima T."/>
            <person name="Furuno M."/>
            <person name="Futaki S."/>
            <person name="Gariboldi M."/>
            <person name="Georgii-Hemming P."/>
            <person name="Gingeras T.R."/>
            <person name="Gojobori T."/>
            <person name="Green R.E."/>
            <person name="Gustincich S."/>
            <person name="Harbers M."/>
            <person name="Hayashi Y."/>
            <person name="Hensch T.K."/>
            <person name="Hirokawa N."/>
            <person name="Hill D."/>
            <person name="Huminiecki L."/>
            <person name="Iacono M."/>
            <person name="Ikeo K."/>
            <person name="Iwama A."/>
            <person name="Ishikawa T."/>
            <person name="Jakt M."/>
            <person name="Kanapin A."/>
            <person name="Katoh M."/>
            <person name="Kawasawa Y."/>
            <person name="Kelso J."/>
            <person name="Kitamura H."/>
            <person name="Kitano H."/>
            <person name="Kollias G."/>
            <person name="Krishnan S.P."/>
            <person name="Kruger A."/>
            <person name="Kummerfeld S.K."/>
            <person name="Kurochkin I.V."/>
            <person name="Lareau L.F."/>
            <person name="Lazarevic D."/>
            <person name="Lipovich L."/>
            <person name="Liu J."/>
            <person name="Liuni S."/>
            <person name="McWilliam S."/>
            <person name="Madan Babu M."/>
            <person name="Madera M."/>
            <person name="Marchionni L."/>
            <person name="Matsuda H."/>
            <person name="Matsuzawa S."/>
            <person name="Miki H."/>
            <person name="Mignone F."/>
            <person name="Miyake S."/>
            <person name="Morris K."/>
            <person name="Mottagui-Tabar S."/>
            <person name="Mulder N."/>
            <person name="Nakano N."/>
            <person name="Nakauchi H."/>
            <person name="Ng P."/>
            <person name="Nilsson R."/>
            <person name="Nishiguchi S."/>
            <person name="Nishikawa S."/>
            <person name="Nori F."/>
            <person name="Ohara O."/>
            <person name="Okazaki Y."/>
            <person name="Orlando V."/>
            <person name="Pang K.C."/>
            <person name="Pavan W.J."/>
            <person name="Pavesi G."/>
            <person name="Pesole G."/>
            <person name="Petrovsky N."/>
            <person name="Piazza S."/>
            <person name="Reed J."/>
            <person name="Reid J.F."/>
            <person name="Ring B.Z."/>
            <person name="Ringwald M."/>
            <person name="Rost B."/>
            <person name="Ruan Y."/>
            <person name="Salzberg S.L."/>
            <person name="Sandelin A."/>
            <person name="Schneider C."/>
            <person name="Schoenbach C."/>
            <person name="Sekiguchi K."/>
            <person name="Semple C.A."/>
            <person name="Seno S."/>
            <person name="Sessa L."/>
            <person name="Sheng Y."/>
            <person name="Shibata Y."/>
            <person name="Shimada H."/>
            <person name="Shimada K."/>
            <person name="Silva D."/>
            <person name="Sinclair B."/>
            <person name="Sperling S."/>
            <person name="Stupka E."/>
            <person name="Sugiura K."/>
            <person name="Sultana R."/>
            <person name="Takenaka Y."/>
            <person name="Taki K."/>
            <person name="Tammoja K."/>
            <person name="Tan S.L."/>
            <person name="Tang S."/>
            <person name="Taylor M.S."/>
            <person name="Tegner J."/>
            <person name="Teichmann S.A."/>
            <person name="Ueda H.R."/>
            <person name="van Nimwegen E."/>
            <person name="Verardo R."/>
            <person name="Wei C.L."/>
            <person name="Yagi K."/>
            <person name="Yamanishi H."/>
            <person name="Zabarovsky E."/>
            <person name="Zhu S."/>
            <person name="Zimmer A."/>
            <person name="Hide W."/>
            <person name="Bult C."/>
            <person name="Grimmond S.M."/>
            <person name="Teasdale R.D."/>
            <person name="Liu E.T."/>
            <person name="Brusic V."/>
            <person name="Quackenbush J."/>
            <person name="Wahlestedt C."/>
            <person name="Mattick J.S."/>
            <person name="Hume D.A."/>
            <person name="Kai C."/>
            <person name="Sasaki D."/>
            <person name="Tomaru Y."/>
            <person name="Fukuda S."/>
            <person name="Kanamori-Katayama M."/>
            <person name="Suzuki M."/>
            <person name="Aoki J."/>
            <person name="Arakawa T."/>
            <person name="Iida J."/>
            <person name="Imamura K."/>
            <person name="Itoh M."/>
            <person name="Kato T."/>
            <person name="Kawaji H."/>
            <person name="Kawagashira N."/>
            <person name="Kawashima T."/>
            <person name="Kojima M."/>
            <person name="Kondo S."/>
            <person name="Konno H."/>
            <person name="Nakano K."/>
            <person name="Ninomiya N."/>
            <person name="Nishio T."/>
            <person name="Okada M."/>
            <person name="Plessy C."/>
            <person name="Shibata K."/>
            <person name="Shiraki T."/>
            <person name="Suzuki S."/>
            <person name="Tagami M."/>
            <person name="Waki K."/>
            <person name="Watahiki A."/>
            <person name="Okamura-Oho Y."/>
            <person name="Suzuki H."/>
            <person name="Kawai J."/>
            <person name="Hayashizaki Y."/>
        </authorList>
    </citation>
    <scope>NUCLEOTIDE SEQUENCE [LARGE SCALE MRNA] OF 1-825 (ISOFORM 1)</scope>
    <scope>NUCLEOTIDE SEQUENCE [LARGE SCALE MRNA] OF 1347-1708 (ISOFORM 1/2)</scope>
    <source>
        <strain evidence="24">C57BL/6J</strain>
        <tissue evidence="24">Cerebellum</tissue>
        <tissue evidence="25">Embryo</tissue>
    </source>
</reference>
<reference evidence="19 26" key="6">
    <citation type="journal article" date="2004" name="DNA Res.">
        <title>Prediction of the coding sequences of mouse homologues of KIAA gene: IV. The complete nucleotide sequences of 500 mouse KIAA-homologous cDNAs identified by screening of terminal sequences of cDNA clones randomly sampled from size-fractionated libraries.</title>
        <authorList>
            <person name="Okazaki N."/>
            <person name="Kikuno R."/>
            <person name="Ohara R."/>
            <person name="Inamoto S."/>
            <person name="Koseki H."/>
            <person name="Hiraoka S."/>
            <person name="Saga Y."/>
            <person name="Seino S."/>
            <person name="Nishimura M."/>
            <person name="Kaisho T."/>
            <person name="Hoshino K."/>
            <person name="Kitamura H."/>
            <person name="Nagase T."/>
            <person name="Ohara O."/>
            <person name="Koga H."/>
        </authorList>
    </citation>
    <scope>NUCLEOTIDE SEQUENCE [LARGE SCALE MRNA] OF 826-1708 (ISOFORM 1/2)</scope>
    <source>
        <tissue evidence="26">Thymus</tissue>
    </source>
</reference>
<reference evidence="19" key="7">
    <citation type="journal article" date="2005" name="J. Biol. Chem.">
        <title>mTOR.RICTOR is the Ser473 kinase for Akt/protein kinase B in 3T3-L1 adipocytes.</title>
        <authorList>
            <person name="Hresko R.C."/>
            <person name="Mueckler M."/>
        </authorList>
    </citation>
    <scope>FUNCTION</scope>
</reference>
<reference evidence="19" key="8">
    <citation type="journal article" date="2006" name="Cell">
        <title>SIN1/MIP1 maintains rictor-mTOR complex integrity and regulates Akt phosphorylation and substrate specificity.</title>
        <authorList>
            <person name="Jacinto E."/>
            <person name="Facchinetti V."/>
            <person name="Liu D."/>
            <person name="Soto N."/>
            <person name="Wei S."/>
            <person name="Jung S.Y."/>
            <person name="Huang Q."/>
            <person name="Qin J."/>
            <person name="Su B."/>
        </authorList>
    </citation>
    <scope>FUNCTION</scope>
    <scope>IDENTIFICATION IN TORC2 COMPLEX</scope>
</reference>
<reference key="9">
    <citation type="journal article" date="2006" name="Dev. Cell">
        <title>Ablation in mice of the mTORC components raptor, rictor, or mLST8 reveals that mTORC2 is required for signaling to Akt-FOXO and PKCalpha, but not S6K1.</title>
        <authorList>
            <person name="Guertin D.A."/>
            <person name="Stevens D.M."/>
            <person name="Thoreen C.C."/>
            <person name="Burds A.A."/>
            <person name="Kalaany N.Y."/>
            <person name="Moffat J."/>
            <person name="Brown M."/>
            <person name="Fitzgerald K.J."/>
            <person name="Sabatini D.M."/>
        </authorList>
    </citation>
    <scope>FUNCTION</scope>
    <scope>DISRUPTION PHENOTYPE</scope>
</reference>
<reference key="10">
    <citation type="journal article" date="2010" name="Cell">
        <title>A tissue-specific atlas of mouse protein phosphorylation and expression.</title>
        <authorList>
            <person name="Huttlin E.L."/>
            <person name="Jedrychowski M.P."/>
            <person name="Elias J.E."/>
            <person name="Goswami T."/>
            <person name="Rad R."/>
            <person name="Beausoleil S.A."/>
            <person name="Villen J."/>
            <person name="Haas W."/>
            <person name="Sowa M.E."/>
            <person name="Gygi S.P."/>
        </authorList>
    </citation>
    <scope>PHOSPHORYLATION [LARGE SCALE ANALYSIS] AT SER-21; SER-1234; SER-1312; SER-1384 AND SER-1387</scope>
    <scope>IDENTIFICATION BY MASS SPECTROMETRY [LARGE SCALE ANALYSIS]</scope>
    <source>
        <tissue>Brain</tissue>
        <tissue>Brown adipose tissue</tissue>
        <tissue>Kidney</tissue>
        <tissue>Lung</tissue>
        <tissue>Pancreas</tissue>
        <tissue>Spleen</tissue>
        <tissue>Testis</tissue>
    </source>
</reference>
<reference key="11">
    <citation type="journal article" date="2012" name="Mol. Cell">
        <title>mTOR complex 2 regulates proper turnover of insulin receptor substrate-1 via the ubiquitin ligase subunit Fbw8.</title>
        <authorList>
            <person name="Kim S.J."/>
            <person name="DeStefano M.A."/>
            <person name="Oh W.J."/>
            <person name="Wu C.C."/>
            <person name="Vega-Cotto N.M."/>
            <person name="Finlan M."/>
            <person name="Liu D."/>
            <person name="Su B."/>
            <person name="Jacinto E."/>
        </authorList>
    </citation>
    <scope>FUNCTION</scope>
</reference>
<reference key="12">
    <citation type="journal article" date="2013" name="Genes Dev.">
        <title>mTOR complex 2 phosphorylates IMP1 cotranslationally to promote IGF2 production and the proliferation of mouse embryonic fibroblasts.</title>
        <authorList>
            <person name="Dai N."/>
            <person name="Christiansen J."/>
            <person name="Nielsen F.C."/>
            <person name="Avruch J."/>
        </authorList>
    </citation>
    <scope>FUNCTION</scope>
</reference>
<reference key="13">
    <citation type="journal article" date="2014" name="Stem Cell Reports">
        <title>Transmembrane Inhibitor of RICTOR/mTORC2 in Hematopoietic Progenitors.</title>
        <authorList>
            <person name="Lee D."/>
            <person name="Sykes S.M."/>
            <person name="Kalaitzidis D."/>
            <person name="Lane A.A."/>
            <person name="Kfoury Y."/>
            <person name="Raaijmakers M.H."/>
            <person name="Wang Y.H."/>
            <person name="Armstrong S.A."/>
            <person name="Scadden D.T."/>
        </authorList>
    </citation>
    <scope>INTERACTION WITH ARMH4</scope>
</reference>
<reference key="14">
    <citation type="journal article" date="2014" name="Nature">
        <title>Cell-cycle-regulated activation of Akt kinase by phosphorylation at its carboxyl terminus.</title>
        <authorList>
            <person name="Liu P."/>
            <person name="Begley M."/>
            <person name="Michowski W."/>
            <person name="Inuzuka H."/>
            <person name="Ginzberg M."/>
            <person name="Gao D."/>
            <person name="Tsou P."/>
            <person name="Gan W."/>
            <person name="Papa A."/>
            <person name="Kim B.M."/>
            <person name="Wan L."/>
            <person name="Singh A."/>
            <person name="Zhai B."/>
            <person name="Yuan M."/>
            <person name="Wang Z."/>
            <person name="Gygi S.P."/>
            <person name="Lee T.H."/>
            <person name="Lu K.P."/>
            <person name="Toker A."/>
            <person name="Pandolfi P.P."/>
            <person name="Asara J.M."/>
            <person name="Kirschner M.W."/>
            <person name="Sicinski P."/>
            <person name="Cantley L."/>
            <person name="Wei W."/>
        </authorList>
    </citation>
    <scope>FUNCTION</scope>
</reference>
<reference key="15">
    <citation type="journal article" date="2017" name="Cancer Cell">
        <title>mTORC2 promotes tumorigenesis via lipid synthesis.</title>
        <authorList>
            <person name="Guri Y."/>
            <person name="Colombi M."/>
            <person name="Dazert E."/>
            <person name="Hindupur S.K."/>
            <person name="Roszik J."/>
            <person name="Moes S."/>
            <person name="Jenoe P."/>
            <person name="Heim M.H."/>
            <person name="Riezman I."/>
            <person name="Riezman H."/>
            <person name="Hall M.N."/>
        </authorList>
    </citation>
    <scope>FUNCTION</scope>
</reference>
<reference key="16">
    <citation type="journal article" date="2020" name="Cell Rep.">
        <title>mTORC2 Assembly Is Regulated by USP9X-Mediated Deubiquitination of RICTOR.</title>
        <authorList>
            <person name="Wrobel L."/>
            <person name="Siddiqi F.H."/>
            <person name="Hill S.M."/>
            <person name="Son S.M."/>
            <person name="Karabiyik C."/>
            <person name="Kim H."/>
            <person name="Rubinsztein D.C."/>
        </authorList>
    </citation>
    <scope>TISSUE SPECIFICITY</scope>
</reference>
<reference key="17">
    <citation type="journal article" date="2021" name="Sci. Signal.">
        <title>mTORC2 controls the activity of PKC and Akt by phosphorylating a conserved TOR interaction motif.</title>
        <authorList>
            <person name="Baffi T.R."/>
            <person name="Lorden G."/>
            <person name="Wozniak J.M."/>
            <person name="Feichtner A."/>
            <person name="Yeung W."/>
            <person name="Kornev A.P."/>
            <person name="King C.C."/>
            <person name="Del Rio J.C."/>
            <person name="Limaye A.J."/>
            <person name="Bogomolovas J."/>
            <person name="Gould C.M."/>
            <person name="Chen J."/>
            <person name="Kennedy E.J."/>
            <person name="Kannan N."/>
            <person name="Gonzalez D.J."/>
            <person name="Stefan E."/>
            <person name="Taylor S.S."/>
            <person name="Newton A.C."/>
        </authorList>
    </citation>
    <scope>FUNCTION</scope>
</reference>
<dbReference type="EMBL" id="AY497009">
    <property type="protein sequence ID" value="AAR89074.1"/>
    <property type="molecule type" value="mRNA"/>
</dbReference>
<dbReference type="EMBL" id="AY540053">
    <property type="protein sequence ID" value="AAS46920.1"/>
    <property type="molecule type" value="mRNA"/>
</dbReference>
<dbReference type="EMBL" id="AC102825">
    <property type="status" value="NOT_ANNOTATED_CDS"/>
    <property type="molecule type" value="Genomic_DNA"/>
</dbReference>
<dbReference type="EMBL" id="AC158901">
    <property type="status" value="NOT_ANNOTATED_CDS"/>
    <property type="molecule type" value="Genomic_DNA"/>
</dbReference>
<dbReference type="EMBL" id="BC058643">
    <property type="protein sequence ID" value="AAH58643.1"/>
    <property type="molecule type" value="mRNA"/>
</dbReference>
<dbReference type="EMBL" id="BC120903">
    <property type="protein sequence ID" value="AAI20904.1"/>
    <property type="molecule type" value="mRNA"/>
</dbReference>
<dbReference type="EMBL" id="AK036149">
    <property type="protein sequence ID" value="BAC29321.2"/>
    <property type="molecule type" value="mRNA"/>
</dbReference>
<dbReference type="EMBL" id="AK075662">
    <property type="protein sequence ID" value="BAC35882.1"/>
    <property type="molecule type" value="mRNA"/>
</dbReference>
<dbReference type="EMBL" id="AK173326">
    <property type="protein sequence ID" value="BAD32604.1"/>
    <property type="molecule type" value="mRNA"/>
</dbReference>
<dbReference type="CCDS" id="CCDS37032.1">
    <molecule id="Q6QI06-1"/>
</dbReference>
<dbReference type="RefSeq" id="NP_084444.3">
    <molecule id="Q6QI06-1"/>
    <property type="nucleotide sequence ID" value="NM_030168.3"/>
</dbReference>
<dbReference type="SMR" id="Q6QI06"/>
<dbReference type="BioGRID" id="219616">
    <property type="interactions" value="13"/>
</dbReference>
<dbReference type="ComplexPortal" id="CPX-4472">
    <property type="entry name" value="mTORC2 complex"/>
</dbReference>
<dbReference type="DIP" id="DIP-46323N"/>
<dbReference type="FunCoup" id="Q6QI06">
    <property type="interactions" value="1088"/>
</dbReference>
<dbReference type="IntAct" id="Q6QI06">
    <property type="interactions" value="8"/>
</dbReference>
<dbReference type="MINT" id="Q6QI06"/>
<dbReference type="STRING" id="10090.ENSMUSP00000051809"/>
<dbReference type="GlyGen" id="Q6QI06">
    <property type="glycosylation" value="3 sites, 2 N-linked glycans (3 sites)"/>
</dbReference>
<dbReference type="iPTMnet" id="Q6QI06"/>
<dbReference type="PhosphoSitePlus" id="Q6QI06"/>
<dbReference type="jPOST" id="Q6QI06"/>
<dbReference type="PaxDb" id="10090-ENSMUSP00000051809"/>
<dbReference type="PeptideAtlas" id="Q6QI06"/>
<dbReference type="ProteomicsDB" id="253239">
    <molecule id="Q6QI06-1"/>
</dbReference>
<dbReference type="ProteomicsDB" id="253240">
    <molecule id="Q6QI06-2"/>
</dbReference>
<dbReference type="Pumba" id="Q6QI06"/>
<dbReference type="Antibodypedia" id="23075">
    <property type="antibodies" value="652 antibodies from 40 providers"/>
</dbReference>
<dbReference type="DNASU" id="78757"/>
<dbReference type="Ensembl" id="ENSMUST00000061656.8">
    <molecule id="Q6QI06-1"/>
    <property type="protein sequence ID" value="ENSMUSP00000051809.7"/>
    <property type="gene ID" value="ENSMUSG00000050310.10"/>
</dbReference>
<dbReference type="GeneID" id="78757"/>
<dbReference type="KEGG" id="mmu:78757"/>
<dbReference type="UCSC" id="uc007vdr.2">
    <molecule id="Q6QI06-1"/>
    <property type="organism name" value="mouse"/>
</dbReference>
<dbReference type="AGR" id="MGI:1926007"/>
<dbReference type="CTD" id="253260"/>
<dbReference type="MGI" id="MGI:1926007">
    <property type="gene designation" value="Rictor"/>
</dbReference>
<dbReference type="VEuPathDB" id="HostDB:ENSMUSG00000050310"/>
<dbReference type="eggNOG" id="KOG3694">
    <property type="taxonomic scope" value="Eukaryota"/>
</dbReference>
<dbReference type="GeneTree" id="ENSGT00390000002096"/>
<dbReference type="HOGENOM" id="CLU_001013_2_0_1"/>
<dbReference type="InParanoid" id="Q6QI06"/>
<dbReference type="OMA" id="METKREC"/>
<dbReference type="OrthoDB" id="271111at2759"/>
<dbReference type="PhylomeDB" id="Q6QI06"/>
<dbReference type="TreeFam" id="TF343656"/>
<dbReference type="Reactome" id="R-MMU-1257604">
    <property type="pathway name" value="PIP3 activates AKT signaling"/>
</dbReference>
<dbReference type="Reactome" id="R-MMU-389357">
    <property type="pathway name" value="CD28 dependent PI3K/Akt signaling"/>
</dbReference>
<dbReference type="Reactome" id="R-MMU-5218920">
    <property type="pathway name" value="VEGFR2 mediated vascular permeability"/>
</dbReference>
<dbReference type="Reactome" id="R-MMU-6804757">
    <property type="pathway name" value="Regulation of TP53 Degradation"/>
</dbReference>
<dbReference type="Reactome" id="R-MMU-9856530">
    <property type="pathway name" value="High laminar flow shear stress activates signaling by PIEZO1 and PECAM1:CDH5:KDR in endothelial cells"/>
</dbReference>
<dbReference type="BioGRID-ORCS" id="78757">
    <property type="hits" value="8 hits in 79 CRISPR screens"/>
</dbReference>
<dbReference type="ChiTaRS" id="Rictor">
    <property type="organism name" value="mouse"/>
</dbReference>
<dbReference type="PRO" id="PR:Q6QI06"/>
<dbReference type="Proteomes" id="UP000000589">
    <property type="component" value="Chromosome 15"/>
</dbReference>
<dbReference type="RNAct" id="Q6QI06">
    <property type="molecule type" value="protein"/>
</dbReference>
<dbReference type="Bgee" id="ENSMUSG00000050310">
    <property type="expression patterns" value="Expressed in cerebellum lobe and 222 other cell types or tissues"/>
</dbReference>
<dbReference type="GO" id="GO:0005783">
    <property type="term" value="C:endoplasmic reticulum"/>
    <property type="evidence" value="ECO:0000250"/>
    <property type="project" value="UniProtKB"/>
</dbReference>
<dbReference type="GO" id="GO:0005789">
    <property type="term" value="C:endoplasmic reticulum membrane"/>
    <property type="evidence" value="ECO:0007669"/>
    <property type="project" value="UniProtKB-SubCell"/>
</dbReference>
<dbReference type="GO" id="GO:0005765">
    <property type="term" value="C:lysosomal membrane"/>
    <property type="evidence" value="ECO:0007669"/>
    <property type="project" value="UniProtKB-SubCell"/>
</dbReference>
<dbReference type="GO" id="GO:0005764">
    <property type="term" value="C:lysosome"/>
    <property type="evidence" value="ECO:0000250"/>
    <property type="project" value="UniProtKB"/>
</dbReference>
<dbReference type="GO" id="GO:0005886">
    <property type="term" value="C:plasma membrane"/>
    <property type="evidence" value="ECO:0000250"/>
    <property type="project" value="UniProtKB"/>
</dbReference>
<dbReference type="GO" id="GO:1902554">
    <property type="term" value="C:serine/threonine protein kinase complex"/>
    <property type="evidence" value="ECO:0007669"/>
    <property type="project" value="Ensembl"/>
</dbReference>
<dbReference type="GO" id="GO:0031932">
    <property type="term" value="C:TORC2 complex"/>
    <property type="evidence" value="ECO:0000314"/>
    <property type="project" value="UniProtKB"/>
</dbReference>
<dbReference type="GO" id="GO:0005524">
    <property type="term" value="F:ATP binding"/>
    <property type="evidence" value="ECO:0000250"/>
    <property type="project" value="UniProtKB"/>
</dbReference>
<dbReference type="GO" id="GO:0140767">
    <property type="term" value="F:enzyme-substrate adaptor activity"/>
    <property type="evidence" value="ECO:0000250"/>
    <property type="project" value="UniProtKB"/>
</dbReference>
<dbReference type="GO" id="GO:0019901">
    <property type="term" value="F:protein kinase binding"/>
    <property type="evidence" value="ECO:0007669"/>
    <property type="project" value="Ensembl"/>
</dbReference>
<dbReference type="GO" id="GO:0043539">
    <property type="term" value="F:protein serine/threonine kinase activator activity"/>
    <property type="evidence" value="ECO:0007669"/>
    <property type="project" value="Ensembl"/>
</dbReference>
<dbReference type="GO" id="GO:0043022">
    <property type="term" value="F:ribosome binding"/>
    <property type="evidence" value="ECO:0000314"/>
    <property type="project" value="UniProtKB"/>
</dbReference>
<dbReference type="GO" id="GO:0008270">
    <property type="term" value="F:zinc ion binding"/>
    <property type="evidence" value="ECO:0000250"/>
    <property type="project" value="UniProtKB"/>
</dbReference>
<dbReference type="GO" id="GO:0030036">
    <property type="term" value="P:actin cytoskeleton organization"/>
    <property type="evidence" value="ECO:0000250"/>
    <property type="project" value="UniProtKB"/>
</dbReference>
<dbReference type="GO" id="GO:0031669">
    <property type="term" value="P:cellular response to nutrient levels"/>
    <property type="evidence" value="ECO:0000303"/>
    <property type="project" value="ComplexPortal"/>
</dbReference>
<dbReference type="GO" id="GO:0007010">
    <property type="term" value="P:cytoskeleton organization"/>
    <property type="evidence" value="ECO:0000303"/>
    <property type="project" value="ComplexPortal"/>
</dbReference>
<dbReference type="GO" id="GO:0009792">
    <property type="term" value="P:embryo development ending in birth or egg hatching"/>
    <property type="evidence" value="ECO:0000315"/>
    <property type="project" value="UniProtKB"/>
</dbReference>
<dbReference type="GO" id="GO:0008610">
    <property type="term" value="P:lipid biosynthetic process"/>
    <property type="evidence" value="ECO:0000314"/>
    <property type="project" value="UniProtKB"/>
</dbReference>
<dbReference type="GO" id="GO:0043066">
    <property type="term" value="P:negative regulation of apoptotic process"/>
    <property type="evidence" value="ECO:0000303"/>
    <property type="project" value="ComplexPortal"/>
</dbReference>
<dbReference type="GO" id="GO:0030838">
    <property type="term" value="P:positive regulation of actin filament polymerization"/>
    <property type="evidence" value="ECO:0000315"/>
    <property type="project" value="MGI"/>
</dbReference>
<dbReference type="GO" id="GO:0030307">
    <property type="term" value="P:positive regulation of cell growth"/>
    <property type="evidence" value="ECO:0000303"/>
    <property type="project" value="ComplexPortal"/>
</dbReference>
<dbReference type="GO" id="GO:0030335">
    <property type="term" value="P:positive regulation of cell migration"/>
    <property type="evidence" value="ECO:0007669"/>
    <property type="project" value="Ensembl"/>
</dbReference>
<dbReference type="GO" id="GO:0001938">
    <property type="term" value="P:positive regulation of endothelial cell proliferation"/>
    <property type="evidence" value="ECO:0007669"/>
    <property type="project" value="Ensembl"/>
</dbReference>
<dbReference type="GO" id="GO:0051897">
    <property type="term" value="P:positive regulation of phosphatidylinositol 3-kinase/protein kinase B signal transduction"/>
    <property type="evidence" value="ECO:0000250"/>
    <property type="project" value="UniProtKB"/>
</dbReference>
<dbReference type="GO" id="GO:0032008">
    <property type="term" value="P:positive regulation of TOR signaling"/>
    <property type="evidence" value="ECO:0007669"/>
    <property type="project" value="Ensembl"/>
</dbReference>
<dbReference type="GO" id="GO:2000114">
    <property type="term" value="P:regulation of establishment of cell polarity"/>
    <property type="evidence" value="ECO:0000315"/>
    <property type="project" value="MGI"/>
</dbReference>
<dbReference type="GO" id="GO:0010468">
    <property type="term" value="P:regulation of gene expression"/>
    <property type="evidence" value="ECO:0000315"/>
    <property type="project" value="MGI"/>
</dbReference>
<dbReference type="GO" id="GO:0050727">
    <property type="term" value="P:regulation of inflammatory response"/>
    <property type="evidence" value="ECO:0000315"/>
    <property type="project" value="MGI"/>
</dbReference>
<dbReference type="GO" id="GO:0051896">
    <property type="term" value="P:regulation of phosphatidylinositol 3-kinase/protein kinase B signal transduction"/>
    <property type="evidence" value="ECO:0000314"/>
    <property type="project" value="UniProtKB"/>
</dbReference>
<dbReference type="GO" id="GO:0001932">
    <property type="term" value="P:regulation of protein phosphorylation"/>
    <property type="evidence" value="ECO:0000315"/>
    <property type="project" value="CACAO"/>
</dbReference>
<dbReference type="GO" id="GO:0038203">
    <property type="term" value="P:TORC2 signaling"/>
    <property type="evidence" value="ECO:0000314"/>
    <property type="project" value="UniProtKB"/>
</dbReference>
<dbReference type="InterPro" id="IPR016024">
    <property type="entry name" value="ARM-type_fold"/>
</dbReference>
<dbReference type="InterPro" id="IPR028268">
    <property type="entry name" value="Pianissimo_fam"/>
</dbReference>
<dbReference type="InterPro" id="IPR028267">
    <property type="entry name" value="Pianissimo_N"/>
</dbReference>
<dbReference type="InterPro" id="IPR029453">
    <property type="entry name" value="Rictor_IV"/>
</dbReference>
<dbReference type="InterPro" id="IPR029451">
    <property type="entry name" value="RICTOR_M"/>
</dbReference>
<dbReference type="InterPro" id="IPR029259">
    <property type="entry name" value="RICTOR_phospho"/>
</dbReference>
<dbReference type="InterPro" id="IPR029452">
    <property type="entry name" value="RICTOR_V"/>
</dbReference>
<dbReference type="PANTHER" id="PTHR13298">
    <property type="entry name" value="CYTOSOLIC REGULATOR PIANISSIMO"/>
    <property type="match status" value="1"/>
</dbReference>
<dbReference type="PANTHER" id="PTHR13298:SF11">
    <property type="entry name" value="RAPAMYCIN-INSENSITIVE COMPANION OF MTOR"/>
    <property type="match status" value="1"/>
</dbReference>
<dbReference type="Pfam" id="PF14663">
    <property type="entry name" value="RasGEF_N_2"/>
    <property type="match status" value="1"/>
</dbReference>
<dbReference type="Pfam" id="PF14666">
    <property type="entry name" value="RICTOR_M"/>
    <property type="match status" value="1"/>
</dbReference>
<dbReference type="Pfam" id="PF14664">
    <property type="entry name" value="RICTOR_N"/>
    <property type="match status" value="1"/>
</dbReference>
<dbReference type="Pfam" id="PF14665">
    <property type="entry name" value="RICTOR_phospho"/>
    <property type="match status" value="1"/>
</dbReference>
<dbReference type="Pfam" id="PF14668">
    <property type="entry name" value="RICTOR_V"/>
    <property type="match status" value="1"/>
</dbReference>
<dbReference type="SMART" id="SM01303">
    <property type="entry name" value="RasGEF_N_2"/>
    <property type="match status" value="1"/>
</dbReference>
<dbReference type="SMART" id="SM01307">
    <property type="entry name" value="RICTOR_M"/>
    <property type="match status" value="1"/>
</dbReference>
<dbReference type="SMART" id="SM01308">
    <property type="entry name" value="RICTOR_N"/>
    <property type="match status" value="1"/>
</dbReference>
<dbReference type="SMART" id="SM01309">
    <property type="entry name" value="RICTOR_phospho"/>
    <property type="match status" value="1"/>
</dbReference>
<dbReference type="SMART" id="SM01310">
    <property type="entry name" value="RICTOR_V"/>
    <property type="match status" value="1"/>
</dbReference>
<dbReference type="SUPFAM" id="SSF48371">
    <property type="entry name" value="ARM repeat"/>
    <property type="match status" value="2"/>
</dbReference>
<comment type="function">
    <text evidence="2 6 7 8 9 10 11 12 14 16">Component of the mechanistic target of rapamycin complex 2 (mTORC2), which transduces signals from growth factors to pathways involved in proliferation, cytoskeletal organization, lipogenesis and anabolic output (PubMed:16221682, PubMed:16962653, PubMed:17141160, PubMed:24670654, PubMed:29232555, PubMed:33850054). In response to growth factors, mTORC2 phosphorylates and activates AGC protein kinase family members, including AKT (AKT1, AKT2 and AKT3), PKC (PRKCA, PRKCB and PRKCE) and SGK1 (PubMed:16221682, PubMed:16962653, PubMed:17141160, PubMed:24670654, PubMed:33850054). In contrast to mTORC1, mTORC2 is nutrient-insensitive (By similarity). Within the mTORC2 complex, RICTOR probably acts as a molecular adapter (By similarity). RICTOR is responsible for the FKBP12-rapamycin-insensitivity of mTORC2 (By similarity). mTORC2 plays a critical role in AKT1 activation by mediating phosphorylation of different sites depending on the context, such as 'Thr-450', 'Ser-473', 'Ser-477' or 'Thr-479', facilitating the phosphorylation of the activation loop of AKT1 on 'Thr-308' by PDPK1/PDK1 which is a prerequisite for full activation (PubMed:16221682, PubMed:16962653, PubMed:17141160). mTORC2 catalyzes the phosphorylation of SGK1 at 'Ser-422' and of PRKCA on 'Ser-657' (PubMed:33850054). The mTORC2 complex also phosphorylates various proteins involved in insulin signaling, such as FBXW8 and IGF2BP1 (PubMed:23142081, PubMed:23388827). mTORC2 acts upstream of Rho GTPases to regulate the actin cytoskeleton, probably by activating one or more Rho-type guanine nucleotide exchange factors (By similarity). mTORC2 promotes the serum-induced formation of stress-fibers or F-actin (By similarity). Plays an essential role in embryonic growth and development (PubMed:16962829).</text>
</comment>
<comment type="subunit">
    <text evidence="2 4 7 8 13">Component of the mechanistic target of rapamycin complex 2 (mTORC2), consisting in two heterotretramers composed of MTOR, MLST8, RICTOR and MAPKAP1/SIN1 (PubMed:15467718, PubMed:16962653, PubMed:16962829). The mTORC2 core complex associates with PRR5/PROTOR1 and/or PRR5L/PROTOR2 (By similarity). Contrary to mTORC1, mTORC2 does not bind to and is not sensitive to FKBP12-rapamycin (By similarity). Binds directly to MTOR and PRR5 within the TORC2 complex; interaction with MTOR is enhanced by deubiquitination of RICTOR by USP9X (By similarity). Interaction with MAPKAP1 is not enhanced by RICTOR deubiquitination by USP9X (By similarity). Interacts with CCDC28B (By similarity). Interacts with NBN (By similarity). Interacts with SIK3 (By similarity). Interacts with NCKAP1L (By similarity). Interacts with ARMH4 (via cytoplasmic tail); this interaction bridges ARMH4 to the mTORC2 complex and inhibits the mTORC2 kinase activity (PubMed:25418727). Interacts with UBXN2A. Interacts with TSPAN8 (By similarity).</text>
</comment>
<comment type="interaction">
    <interactant intactId="EBI-4286572">
        <id>Q6QI06</id>
    </interactant>
    <interactant intactId="EBI-1571628">
        <id>Q9JLN9</id>
        <label>Mtor</label>
    </interactant>
    <organismsDiffer>false</organismsDiffer>
    <experiments>12</experiments>
</comment>
<comment type="subcellular location">
    <subcellularLocation>
        <location evidence="2">Cell membrane</location>
    </subcellularLocation>
    <subcellularLocation>
        <location evidence="2">Endoplasmic reticulum membrane</location>
    </subcellularLocation>
    <subcellularLocation>
        <location evidence="2">Lysosome membrane</location>
    </subcellularLocation>
    <text evidence="2">The mTORC2 complex localizes to membranes: mTORC2 is active at the plasma membrane, endoplasmic reticulum membrane and lysosomes. Iin lysosomal membrane, mTORC2 is sensitive to lysosomal positioning in the cell.</text>
</comment>
<comment type="alternative products">
    <event type="alternative splicing"/>
    <isoform>
        <id>Q6QI06-1</id>
        <name evidence="4 8">1</name>
        <sequence type="displayed"/>
    </isoform>
    <isoform>
        <id>Q6QI06-2</id>
        <name evidence="5">2</name>
        <sequence type="described" ref="VSP_052583"/>
    </isoform>
</comment>
<comment type="tissue specificity">
    <text evidence="15">Highest levels in liver and brain with expression also detected in heart, muscle, spleen and kidney (at protein level).</text>
</comment>
<comment type="PTM">
    <text evidence="2">Phosphorylated by MTOR; when part of mTORC2 (By similarity). Phosphorylated at Thr-1135 by RPS6KB1 downstream of the mTORC1 complex: phosphorylation of RICTOR inhibits mTORC2 signaling by creating a binding site for 14-3-3 proteins (By similarity). Phosphorylated at Ser-1234 by GSK3B in response to endoplasmic stress, inhibiting mTORC2 signaling (By similarity).</text>
</comment>
<comment type="PTM">
    <text evidence="2">Ubiquitinated by the SCF(FBXW7) complex, leading to its degradation by the proteasome. Deubiquitinated by USP9X; deubiquitination stabilizes RICTOR and enhances its binding to MTOR, thus promoting mTORC2 complex assembly.</text>
</comment>
<comment type="PTM">
    <text evidence="2">Acetylated by EP300/p300 in response to glucose, leading to activate the mTORC2 complex (By similarity). Acetylation by BLOC1S1/GCN5L1 in response to hypotoxic stress protects RICTOR against ubiquitination and subsequent degradation by the proteasome (By similarity).</text>
</comment>
<comment type="disruption phenotype">
    <text evidence="8 9">Mice develop normally until 9.5 dpc, and then display growth arrest and embryonic lethality by 11.5 dpc.</text>
</comment>
<comment type="similarity">
    <text evidence="19">Belongs to the RICTOR family.</text>
</comment>
<gene>
    <name evidence="17 27" type="primary">Rictor</name>
    <name evidence="26" type="synonym">Kiaa1999</name>
</gene>
<evidence type="ECO:0000250" key="1"/>
<evidence type="ECO:0000250" key="2">
    <source>
        <dbReference type="UniProtKB" id="Q6R327"/>
    </source>
</evidence>
<evidence type="ECO:0000256" key="3">
    <source>
        <dbReference type="SAM" id="MobiDB-lite"/>
    </source>
</evidence>
<evidence type="ECO:0000269" key="4">
    <source>
    </source>
</evidence>
<evidence type="ECO:0000269" key="5">
    <source>
    </source>
</evidence>
<evidence type="ECO:0000269" key="6">
    <source>
    </source>
</evidence>
<evidence type="ECO:0000269" key="7">
    <source>
    </source>
</evidence>
<evidence type="ECO:0000269" key="8">
    <source>
    </source>
</evidence>
<evidence type="ECO:0000269" key="9">
    <source>
    </source>
</evidence>
<evidence type="ECO:0000269" key="10">
    <source>
    </source>
</evidence>
<evidence type="ECO:0000269" key="11">
    <source>
    </source>
</evidence>
<evidence type="ECO:0000269" key="12">
    <source>
    </source>
</evidence>
<evidence type="ECO:0000269" key="13">
    <source>
    </source>
</evidence>
<evidence type="ECO:0000269" key="14">
    <source>
    </source>
</evidence>
<evidence type="ECO:0000269" key="15">
    <source>
    </source>
</evidence>
<evidence type="ECO:0000269" key="16">
    <source>
    </source>
</evidence>
<evidence type="ECO:0000303" key="17">
    <source>
    </source>
</evidence>
<evidence type="ECO:0000303" key="18">
    <source>
    </source>
</evidence>
<evidence type="ECO:0000305" key="19"/>
<evidence type="ECO:0000312" key="20">
    <source>
        <dbReference type="EMBL" id="AAH58643.1"/>
    </source>
</evidence>
<evidence type="ECO:0000312" key="21">
    <source>
        <dbReference type="EMBL" id="AAI20904.1"/>
    </source>
</evidence>
<evidence type="ECO:0000312" key="22">
    <source>
        <dbReference type="EMBL" id="AAR89074.1"/>
    </source>
</evidence>
<evidence type="ECO:0000312" key="23">
    <source>
        <dbReference type="EMBL" id="AAS46920.1"/>
    </source>
</evidence>
<evidence type="ECO:0000312" key="24">
    <source>
        <dbReference type="EMBL" id="BAC29321.2"/>
    </source>
</evidence>
<evidence type="ECO:0000312" key="25">
    <source>
        <dbReference type="EMBL" id="BAC35882.1"/>
    </source>
</evidence>
<evidence type="ECO:0000312" key="26">
    <source>
        <dbReference type="EMBL" id="BAD32604.1"/>
    </source>
</evidence>
<evidence type="ECO:0000312" key="27">
    <source>
        <dbReference type="MGI" id="MGI:1926007"/>
    </source>
</evidence>
<evidence type="ECO:0007744" key="28">
    <source>
    </source>
</evidence>
<keyword id="KW-0007">Acetylation</keyword>
<keyword id="KW-0025">Alternative splicing</keyword>
<keyword id="KW-0067">ATP-binding</keyword>
<keyword id="KW-1003">Cell membrane</keyword>
<keyword id="KW-0217">Developmental protein</keyword>
<keyword id="KW-0256">Endoplasmic reticulum</keyword>
<keyword id="KW-1017">Isopeptide bond</keyword>
<keyword id="KW-0458">Lysosome</keyword>
<keyword id="KW-0472">Membrane</keyword>
<keyword id="KW-0479">Metal-binding</keyword>
<keyword id="KW-0547">Nucleotide-binding</keyword>
<keyword id="KW-0597">Phosphoprotein</keyword>
<keyword id="KW-1185">Reference proteome</keyword>
<keyword id="KW-0832">Ubl conjugation</keyword>
<keyword id="KW-0862">Zinc</keyword>